<protein>
    <recommendedName>
        <fullName evidence="14">Acyl carrier protein, mitochondrial</fullName>
        <shortName>ACP</shortName>
    </recommendedName>
    <alternativeName>
        <fullName>CI-SDAP</fullName>
    </alternativeName>
    <alternativeName>
        <fullName>NADH-ubiquinone oxidoreductase 9.6 kDa subunit</fullName>
    </alternativeName>
</protein>
<comment type="function">
    <text evidence="1 3 9 12">Carrier of the growing fatty acid chain in fatty acid biosynthesis (By similarity) (PubMed:27626371). Accessory and non-catalytic subunit of the mitochondrial membrane respiratory chain NADH dehydrogenase (Complex I), which functions in the transfer of electrons from NADH to the respiratory chain (PubMed:27626371). Accessory protein, of the core iron-sulfur cluster (ISC) assembly complex, that regulates, in association with LYRM4, the stability and the cysteine desulfurase activity of NFS1 and participates in the [2Fe-2S] clusters assembly on the scaffolding protein ISCU (PubMed:31664822). The core iron-sulfur cluster (ISC) assembly complex is involved in the de novo synthesis of a [2Fe-2S] cluster, the first step of the mitochondrial iron-sulfur protein biogenesis. This process is initiated by the cysteine desulfurase complex (NFS1:LYRM4:NDUFAB1) that produces persulfide which is delivered on the scaffold protein ISCU in a FXN-dependent manner. Then this complex is stabilized by FDX2 which provides reducing equivalents to accomplish the [2Fe-2S] cluster assembly. Finally, the [2Fe-2S] cluster is transferred from ISCU to chaperone proteins, including HSCB, HSPA9 and GLRX5 (By similarity).</text>
</comment>
<comment type="subunit">
    <text evidence="5 7 8 10 11 12 13 15">Mammalian complex I is composed of 45 different subunits (PubMed:12611891). Interacts with ETFRF1 (PubMed:27499296). Identified in a complex composed of MALSU1, MIEF1 upstream open reading frame protein and NDUFAB1; within the trimeric complex, MIEF1 upstream open reading frame protein functions as a bridging scaffold that interacts with MALSU1 on one side, and with NDUFAB1 on the other side. The complex interacts with the mitochondrial large ribosomal subunit (PubMed:28892042, PubMed:30215512, PubMed:35177605). Interacts with alpha-1-microglobulin chain; this interaction is required for the maintenance of mitochondrial redox homeostasis. Component of the mitochondrial core iron-sulfur cluster (ISC) complex composed of NFS1, LYRM4, NDUFAB1, ISCU, FXN, and FDX2; this complex is a heterohexamer containing two copies of each monomer (Probable). Component of the cyteine desulfurase complex composed of NFS1, LYRM4 and NDUFAB1; this complex contributes to the stability and cysteine desulfurase activity of NFS1 (PubMed:31664822).</text>
</comment>
<comment type="interaction">
    <interactant intactId="EBI-1246261">
        <id>O14561</id>
    </interactant>
    <interactant intactId="EBI-2880652">
        <id>Q08043</id>
        <label>ACTN3</label>
    </interactant>
    <organismsDiffer>false</organismsDiffer>
    <experiments>3</experiments>
</comment>
<comment type="interaction">
    <interactant intactId="EBI-1246261">
        <id>O14561</id>
    </interactant>
    <interactant intactId="EBI-17289784">
        <id>Q96PG8</id>
        <label>BBC3</label>
    </interactant>
    <organismsDiffer>false</organismsDiffer>
    <experiments>3</experiments>
</comment>
<comment type="interaction">
    <interactant intactId="EBI-1246261">
        <id>O14561</id>
    </interactant>
    <interactant intactId="EBI-10243741">
        <id>Q5H9J7</id>
        <label>BEX5</label>
    </interactant>
    <organismsDiffer>false</organismsDiffer>
    <experiments>3</experiments>
</comment>
<comment type="interaction">
    <interactant intactId="EBI-1246261">
        <id>O14561</id>
    </interactant>
    <interactant intactId="EBI-1104933">
        <id>Q8N4L8</id>
        <label>CCDC24</label>
    </interactant>
    <organismsDiffer>false</organismsDiffer>
    <experiments>3</experiments>
</comment>
<comment type="interaction">
    <interactant intactId="EBI-1246261">
        <id>O14561</id>
    </interactant>
    <interactant intactId="EBI-1050897">
        <id>P26441</id>
        <label>CNTF</label>
    </interactant>
    <organismsDiffer>false</organismsDiffer>
    <experiments>3</experiments>
</comment>
<comment type="interaction">
    <interactant intactId="EBI-1246261">
        <id>O14561</id>
    </interactant>
    <interactant intactId="EBI-2515349">
        <id>Q9BSK4</id>
        <label>FEM1A</label>
    </interactant>
    <organismsDiffer>false</organismsDiffer>
    <experiments>3</experiments>
</comment>
<comment type="interaction">
    <interactant intactId="EBI-1246261">
        <id>O14561</id>
    </interactant>
    <interactant intactId="EBI-741101">
        <id>Q13643</id>
        <label>FHL3</label>
    </interactant>
    <organismsDiffer>false</organismsDiffer>
    <experiments>5</experiments>
</comment>
<comment type="interaction">
    <interactant intactId="EBI-1246261">
        <id>O14561</id>
    </interactant>
    <interactant intactId="EBI-10242151">
        <id>Q53EP0-3</id>
        <label>FNDC3B</label>
    </interactant>
    <organismsDiffer>false</organismsDiffer>
    <experiments>5</experiments>
</comment>
<comment type="interaction">
    <interactant intactId="EBI-1246261">
        <id>O14561</id>
    </interactant>
    <interactant intactId="EBI-749065">
        <id>Q9BQA5</id>
        <label>HINFP</label>
    </interactant>
    <organismsDiffer>false</organismsDiffer>
    <experiments>3</experiments>
</comment>
<comment type="interaction">
    <interactant intactId="EBI-1246261">
        <id>O14561</id>
    </interactant>
    <interactant intactId="EBI-4397613">
        <id>Q7L273</id>
        <label>KCTD9</label>
    </interactant>
    <organismsDiffer>false</organismsDiffer>
    <experiments>3</experiments>
</comment>
<comment type="interaction">
    <interactant intactId="EBI-1246261">
        <id>O14561</id>
    </interactant>
    <interactant intactId="EBI-11959475">
        <id>P25791-3</id>
        <label>LMO2</label>
    </interactant>
    <organismsDiffer>false</organismsDiffer>
    <experiments>3</experiments>
</comment>
<comment type="interaction">
    <interactant intactId="EBI-1246261">
        <id>O14561</id>
    </interactant>
    <interactant intactId="EBI-739832">
        <id>Q8TBB1</id>
        <label>LNX1</label>
    </interactant>
    <organismsDiffer>false</organismsDiffer>
    <experiments>3</experiments>
</comment>
<comment type="interaction">
    <interactant intactId="EBI-1246261">
        <id>O14561</id>
    </interactant>
    <interactant intactId="EBI-9675802">
        <id>Q6PF18</id>
        <label>MORN3</label>
    </interactant>
    <organismsDiffer>false</organismsDiffer>
    <experiments>3</experiments>
</comment>
<comment type="interaction">
    <interactant intactId="EBI-1246261">
        <id>O14561</id>
    </interactant>
    <interactant intactId="EBI-12025760">
        <id>Q86UR1-2</id>
        <label>NOXA1</label>
    </interactant>
    <organismsDiffer>false</organismsDiffer>
    <experiments>3</experiments>
</comment>
<comment type="interaction">
    <interactant intactId="EBI-1246261">
        <id>O14561</id>
    </interactant>
    <interactant intactId="EBI-11742836">
        <id>Q16656-4</id>
        <label>NRF1</label>
    </interactant>
    <organismsDiffer>false</organismsDiffer>
    <experiments>3</experiments>
</comment>
<comment type="interaction">
    <interactant intactId="EBI-1246261">
        <id>O14561</id>
    </interactant>
    <interactant intactId="EBI-741158">
        <id>Q96HA8</id>
        <label>NTAQ1</label>
    </interactant>
    <organismsDiffer>false</organismsDiffer>
    <experiments>3</experiments>
</comment>
<comment type="interaction">
    <interactant intactId="EBI-1246261">
        <id>O14561</id>
    </interactant>
    <interactant intactId="EBI-536879">
        <id>O43482</id>
        <label>OIP5</label>
    </interactant>
    <organismsDiffer>false</organismsDiffer>
    <experiments>3</experiments>
</comment>
<comment type="interaction">
    <interactant intactId="EBI-1246261">
        <id>O14561</id>
    </interactant>
    <interactant intactId="EBI-366525">
        <id>Q969H6</id>
        <label>POP5</label>
    </interactant>
    <organismsDiffer>false</organismsDiffer>
    <experiments>3</experiments>
</comment>
<comment type="interaction">
    <interactant intactId="EBI-1246261">
        <id>O14561</id>
    </interactant>
    <interactant intactId="EBI-710402">
        <id>Q96I34</id>
        <label>PPP1R16A</label>
    </interactant>
    <organismsDiffer>false</organismsDiffer>
    <experiments>3</experiments>
</comment>
<comment type="interaction">
    <interactant intactId="EBI-1246261">
        <id>O14561</id>
    </interactant>
    <interactant intactId="EBI-359720">
        <id>P17980</id>
        <label>PSMC3</label>
    </interactant>
    <organismsDiffer>false</organismsDiffer>
    <experiments>6</experiments>
</comment>
<comment type="interaction">
    <interactant intactId="EBI-1246261">
        <id>O14561</id>
    </interactant>
    <interactant intactId="EBI-1050793">
        <id>Q9GZT3</id>
        <label>SLIRP</label>
    </interactant>
    <organismsDiffer>false</organismsDiffer>
    <experiments>4</experiments>
</comment>
<comment type="interaction">
    <interactant intactId="EBI-1246261">
        <id>O14561</id>
    </interactant>
    <interactant intactId="EBI-741515">
        <id>Q9NVV9</id>
        <label>THAP1</label>
    </interactant>
    <organismsDiffer>false</organismsDiffer>
    <experiments>3</experiments>
</comment>
<comment type="interaction">
    <interactant intactId="EBI-1246261">
        <id>O14561</id>
    </interactant>
    <interactant intactId="EBI-3939165">
        <id>O43711</id>
        <label>TLX3</label>
    </interactant>
    <organismsDiffer>false</organismsDiffer>
    <experiments>5</experiments>
</comment>
<comment type="interaction">
    <interactant intactId="EBI-1246261">
        <id>O14561</id>
    </interactant>
    <interactant intactId="EBI-12815137">
        <id>Q96NM4-3</id>
        <label>TOX2</label>
    </interactant>
    <organismsDiffer>false</organismsDiffer>
    <experiments>3</experiments>
</comment>
<comment type="interaction">
    <interactant intactId="EBI-1246261">
        <id>O14561</id>
    </interactant>
    <interactant intactId="EBI-2107455">
        <id>Q08AM6</id>
        <label>VAC14</label>
    </interactant>
    <organismsDiffer>false</organismsDiffer>
    <experiments>3</experiments>
</comment>
<comment type="interaction">
    <interactant intactId="EBI-1246261">
        <id>O14561</id>
    </interactant>
    <interactant intactId="EBI-12884200">
        <id>P17023</id>
        <label>ZNF19</label>
    </interactant>
    <organismsDiffer>false</organismsDiffer>
    <experiments>3</experiments>
</comment>
<comment type="interaction">
    <interactant intactId="EBI-1246261">
        <id>O14561</id>
    </interactant>
    <interactant intactId="EBI-11741890">
        <id>Q86VK4-3</id>
        <label>ZNF410</label>
    </interactant>
    <organismsDiffer>false</organismsDiffer>
    <experiments>3</experiments>
</comment>
<comment type="interaction">
    <interactant intactId="EBI-1246261">
        <id>O14561</id>
    </interactant>
    <interactant intactId="EBI-18036029">
        <id>Q3KNS6-3</id>
        <label>ZNF829</label>
    </interactant>
    <organismsDiffer>false</organismsDiffer>
    <experiments>3</experiments>
</comment>
<comment type="subcellular location">
    <subcellularLocation>
        <location evidence="5 10">Mitochondrion</location>
    </subcellularLocation>
</comment>
<comment type="PTM">
    <text evidence="12">Phosphopantetheinylation at Ser-112 is essential for interactions with LYR motif-containing proteins.</text>
</comment>
<comment type="miscellaneous">
    <text evidence="9">In contrast to other accessory subunits of complex I, NDUFAB1 is the only subunit that is essential for cell viability in HEK293T cells. Since knockout cells lack assembled complex I and die in galactose media, this suggests that the essential role of NDUFAB1 is independent of complex I.</text>
</comment>
<comment type="similarity">
    <text evidence="14">Belongs to the acyl carrier protein (ACP) family.</text>
</comment>
<comment type="sequence caution" evidence="14">
    <conflict type="erroneous initiation">
        <sequence resource="EMBL-CDS" id="AAC05814"/>
    </conflict>
    <text>Extended N-terminus.</text>
</comment>
<accession>O14561</accession>
<accession>B2R4M1</accession>
<accession>Q9UNV1</accession>
<proteinExistence type="evidence at protein level"/>
<dbReference type="EMBL" id="AF087660">
    <property type="protein sequence ID" value="AAD23566.1"/>
    <property type="molecule type" value="mRNA"/>
</dbReference>
<dbReference type="EMBL" id="AK311877">
    <property type="protein sequence ID" value="BAG34818.1"/>
    <property type="molecule type" value="mRNA"/>
</dbReference>
<dbReference type="EMBL" id="AC002400">
    <property type="protein sequence ID" value="AAC05814.1"/>
    <property type="status" value="ALT_INIT"/>
    <property type="molecule type" value="Genomic_DNA"/>
</dbReference>
<dbReference type="EMBL" id="CH471145">
    <property type="protein sequence ID" value="EAW55816.1"/>
    <property type="molecule type" value="Genomic_DNA"/>
</dbReference>
<dbReference type="EMBL" id="BC058920">
    <property type="protein sequence ID" value="AAH58920.1"/>
    <property type="molecule type" value="mRNA"/>
</dbReference>
<dbReference type="CCDS" id="CCDS10614.1"/>
<dbReference type="PIR" id="T00741">
    <property type="entry name" value="T00741"/>
</dbReference>
<dbReference type="RefSeq" id="NP_004994.1">
    <property type="nucleotide sequence ID" value="NM_005003.3"/>
</dbReference>
<dbReference type="PDB" id="2DNW">
    <property type="method" value="NMR"/>
    <property type="chains" value="A=71-156"/>
</dbReference>
<dbReference type="PDB" id="5OOL">
    <property type="method" value="EM"/>
    <property type="resolution" value="3.06 A"/>
    <property type="chains" value="w=1-156"/>
</dbReference>
<dbReference type="PDB" id="5OOM">
    <property type="method" value="EM"/>
    <property type="resolution" value="3.03 A"/>
    <property type="chains" value="w=1-156"/>
</dbReference>
<dbReference type="PDB" id="5XTB">
    <property type="method" value="EM"/>
    <property type="resolution" value="3.40 A"/>
    <property type="chains" value="G=72-156"/>
</dbReference>
<dbReference type="PDB" id="5XTC">
    <property type="method" value="EM"/>
    <property type="resolution" value="3.70 A"/>
    <property type="chains" value="X=72-156"/>
</dbReference>
<dbReference type="PDB" id="5XTD">
    <property type="method" value="EM"/>
    <property type="resolution" value="3.70 A"/>
    <property type="chains" value="G/X=72-156"/>
</dbReference>
<dbReference type="PDB" id="5XTH">
    <property type="method" value="EM"/>
    <property type="resolution" value="3.90 A"/>
    <property type="chains" value="G/X=72-156"/>
</dbReference>
<dbReference type="PDB" id="5XTI">
    <property type="method" value="EM"/>
    <property type="resolution" value="17.40 A"/>
    <property type="chains" value="BG/BX/G/X=72-156"/>
</dbReference>
<dbReference type="PDB" id="6ODD">
    <property type="method" value="X-ray"/>
    <property type="resolution" value="2.00 A"/>
    <property type="chains" value="A=72-156"/>
</dbReference>
<dbReference type="PDB" id="7A5H">
    <property type="method" value="EM"/>
    <property type="resolution" value="3.30 A"/>
    <property type="chains" value="w=1-156"/>
</dbReference>
<dbReference type="PDB" id="7A5J">
    <property type="method" value="EM"/>
    <property type="resolution" value="3.10 A"/>
    <property type="chains" value="w=1-156"/>
</dbReference>
<dbReference type="PDB" id="7O9K">
    <property type="method" value="EM"/>
    <property type="resolution" value="3.10 A"/>
    <property type="chains" value="w=1-156"/>
</dbReference>
<dbReference type="PDB" id="7O9M">
    <property type="method" value="EM"/>
    <property type="resolution" value="2.50 A"/>
    <property type="chains" value="w=1-156"/>
</dbReference>
<dbReference type="PDB" id="7ODR">
    <property type="method" value="EM"/>
    <property type="resolution" value="2.90 A"/>
    <property type="chains" value="w=1-156"/>
</dbReference>
<dbReference type="PDB" id="7ODS">
    <property type="method" value="EM"/>
    <property type="resolution" value="3.10 A"/>
    <property type="chains" value="w=1-156"/>
</dbReference>
<dbReference type="PDB" id="7ODT">
    <property type="method" value="EM"/>
    <property type="resolution" value="3.10 A"/>
    <property type="chains" value="w=1-156"/>
</dbReference>
<dbReference type="PDB" id="7OF0">
    <property type="method" value="EM"/>
    <property type="resolution" value="2.20 A"/>
    <property type="chains" value="w=1-156"/>
</dbReference>
<dbReference type="PDB" id="7OF2">
    <property type="method" value="EM"/>
    <property type="resolution" value="2.70 A"/>
    <property type="chains" value="w=1-156"/>
</dbReference>
<dbReference type="PDB" id="7OF3">
    <property type="method" value="EM"/>
    <property type="resolution" value="2.70 A"/>
    <property type="chains" value="w=1-156"/>
</dbReference>
<dbReference type="PDB" id="7OF5">
    <property type="method" value="EM"/>
    <property type="resolution" value="2.90 A"/>
    <property type="chains" value="w=1-156"/>
</dbReference>
<dbReference type="PDB" id="7OF7">
    <property type="method" value="EM"/>
    <property type="resolution" value="2.50 A"/>
    <property type="chains" value="w=1-156"/>
</dbReference>
<dbReference type="PDB" id="7OI6">
    <property type="method" value="EM"/>
    <property type="resolution" value="5.70 A"/>
    <property type="chains" value="w=1-156"/>
</dbReference>
<dbReference type="PDB" id="7OI7">
    <property type="method" value="EM"/>
    <property type="resolution" value="3.50 A"/>
    <property type="chains" value="w=1-156"/>
</dbReference>
<dbReference type="PDB" id="7OI8">
    <property type="method" value="EM"/>
    <property type="resolution" value="3.50 A"/>
    <property type="chains" value="w=1-156"/>
</dbReference>
<dbReference type="PDB" id="7OI9">
    <property type="method" value="EM"/>
    <property type="resolution" value="3.30 A"/>
    <property type="chains" value="w=1-156"/>
</dbReference>
<dbReference type="PDB" id="7OIC">
    <property type="method" value="EM"/>
    <property type="resolution" value="3.10 A"/>
    <property type="chains" value="w=1-156"/>
</dbReference>
<dbReference type="PDB" id="7OID">
    <property type="method" value="EM"/>
    <property type="resolution" value="3.70 A"/>
    <property type="chains" value="w=1-156"/>
</dbReference>
<dbReference type="PDB" id="7OIE">
    <property type="method" value="EM"/>
    <property type="resolution" value="3.50 A"/>
    <property type="chains" value="w=1-156"/>
</dbReference>
<dbReference type="PDB" id="7PD3">
    <property type="method" value="EM"/>
    <property type="resolution" value="3.40 A"/>
    <property type="chains" value="w=1-156"/>
</dbReference>
<dbReference type="PDB" id="7PO4">
    <property type="method" value="EM"/>
    <property type="resolution" value="2.56 A"/>
    <property type="chains" value="zc=1-156"/>
</dbReference>
<dbReference type="PDB" id="7QH6">
    <property type="method" value="EM"/>
    <property type="resolution" value="3.08 A"/>
    <property type="chains" value="w=1-156"/>
</dbReference>
<dbReference type="PDB" id="7QH7">
    <property type="method" value="EM"/>
    <property type="resolution" value="2.89 A"/>
    <property type="chains" value="w=74-152"/>
</dbReference>
<dbReference type="PDB" id="8K2B">
    <property type="method" value="EM"/>
    <property type="resolution" value="3.40 A"/>
    <property type="chains" value="w=1-156"/>
</dbReference>
<dbReference type="PDB" id="8PK0">
    <property type="method" value="EM"/>
    <property type="resolution" value="3.03 A"/>
    <property type="chains" value="w=1-156"/>
</dbReference>
<dbReference type="PDB" id="8QSJ">
    <property type="method" value="EM"/>
    <property type="resolution" value="3.00 A"/>
    <property type="chains" value="w=1-156"/>
</dbReference>
<dbReference type="PDB" id="8QU5">
    <property type="method" value="EM"/>
    <property type="resolution" value="2.42 A"/>
    <property type="chains" value="w=1-156"/>
</dbReference>
<dbReference type="PDBsum" id="2DNW"/>
<dbReference type="PDBsum" id="5OOL"/>
<dbReference type="PDBsum" id="5OOM"/>
<dbReference type="PDBsum" id="5XTB"/>
<dbReference type="PDBsum" id="5XTC"/>
<dbReference type="PDBsum" id="5XTD"/>
<dbReference type="PDBsum" id="5XTH"/>
<dbReference type="PDBsum" id="5XTI"/>
<dbReference type="PDBsum" id="6ODD"/>
<dbReference type="PDBsum" id="7A5H"/>
<dbReference type="PDBsum" id="7A5J"/>
<dbReference type="PDBsum" id="7O9K"/>
<dbReference type="PDBsum" id="7O9M"/>
<dbReference type="PDBsum" id="7ODR"/>
<dbReference type="PDBsum" id="7ODS"/>
<dbReference type="PDBsum" id="7ODT"/>
<dbReference type="PDBsum" id="7OF0"/>
<dbReference type="PDBsum" id="7OF2"/>
<dbReference type="PDBsum" id="7OF3"/>
<dbReference type="PDBsum" id="7OF5"/>
<dbReference type="PDBsum" id="7OF7"/>
<dbReference type="PDBsum" id="7OI6"/>
<dbReference type="PDBsum" id="7OI7"/>
<dbReference type="PDBsum" id="7OI8"/>
<dbReference type="PDBsum" id="7OI9"/>
<dbReference type="PDBsum" id="7OIC"/>
<dbReference type="PDBsum" id="7OID"/>
<dbReference type="PDBsum" id="7OIE"/>
<dbReference type="PDBsum" id="7PD3"/>
<dbReference type="PDBsum" id="7PO4"/>
<dbReference type="PDBsum" id="7QH6"/>
<dbReference type="PDBsum" id="7QH7"/>
<dbReference type="PDBsum" id="8K2B"/>
<dbReference type="PDBsum" id="8PK0"/>
<dbReference type="PDBsum" id="8QSJ"/>
<dbReference type="PDBsum" id="8QU5"/>
<dbReference type="EMDB" id="EMD-11643"/>
<dbReference type="EMDB" id="EMD-11645"/>
<dbReference type="EMDB" id="EMD-12763"/>
<dbReference type="EMDB" id="EMD-12764"/>
<dbReference type="EMDB" id="EMD-12845"/>
<dbReference type="EMDB" id="EMD-12846"/>
<dbReference type="EMDB" id="EMD-12847"/>
<dbReference type="EMDB" id="EMD-12865"/>
<dbReference type="EMDB" id="EMD-12867"/>
<dbReference type="EMDB" id="EMD-12868"/>
<dbReference type="EMDB" id="EMD-12870"/>
<dbReference type="EMDB" id="EMD-12872"/>
<dbReference type="EMDB" id="EMD-12919"/>
<dbReference type="EMDB" id="EMD-12920"/>
<dbReference type="EMDB" id="EMD-12921"/>
<dbReference type="EMDB" id="EMD-12922"/>
<dbReference type="EMDB" id="EMD-12925"/>
<dbReference type="EMDB" id="EMD-12926"/>
<dbReference type="EMDB" id="EMD-12927"/>
<dbReference type="EMDB" id="EMD-13329"/>
<dbReference type="EMDB" id="EMD-13562"/>
<dbReference type="EMDB" id="EMD-13965"/>
<dbReference type="EMDB" id="EMD-13967"/>
<dbReference type="EMDB" id="EMD-17719"/>
<dbReference type="EMDB" id="EMD-36837"/>
<dbReference type="EMDB" id="EMD-3842"/>
<dbReference type="EMDB" id="EMD-3843"/>
<dbReference type="SMR" id="O14561"/>
<dbReference type="BioGRID" id="110786">
    <property type="interactions" value="162"/>
</dbReference>
<dbReference type="ComplexPortal" id="CPX-5641">
    <property type="entry name" value="Mitochondrial NIAUFX iron-sulfur cluster assembly complex"/>
</dbReference>
<dbReference type="ComplexPortal" id="CPX-577">
    <property type="entry name" value="Mitochondrial respiratory chain complex I"/>
</dbReference>
<dbReference type="CORUM" id="O14561"/>
<dbReference type="FunCoup" id="O14561">
    <property type="interactions" value="2552"/>
</dbReference>
<dbReference type="IntAct" id="O14561">
    <property type="interactions" value="162"/>
</dbReference>
<dbReference type="MINT" id="O14561"/>
<dbReference type="STRING" id="9606.ENSP00000458770"/>
<dbReference type="BindingDB" id="O14561"/>
<dbReference type="ChEMBL" id="CHEMBL2363065"/>
<dbReference type="DrugBank" id="DB00157">
    <property type="generic name" value="NADH"/>
</dbReference>
<dbReference type="DrugCentral" id="O14561"/>
<dbReference type="GlyGen" id="O14561">
    <property type="glycosylation" value="2 sites, 1 O-linked glycan (1 site)"/>
</dbReference>
<dbReference type="iPTMnet" id="O14561"/>
<dbReference type="PhosphoSitePlus" id="O14561"/>
<dbReference type="SwissPalm" id="O14561"/>
<dbReference type="BioMuta" id="NDUFAB1"/>
<dbReference type="jPOST" id="O14561"/>
<dbReference type="MassIVE" id="O14561"/>
<dbReference type="PaxDb" id="9606-ENSP00000458770"/>
<dbReference type="PeptideAtlas" id="O14561"/>
<dbReference type="ProteomicsDB" id="48088"/>
<dbReference type="Pumba" id="O14561"/>
<dbReference type="TopDownProteomics" id="O14561"/>
<dbReference type="Antibodypedia" id="25997">
    <property type="antibodies" value="112 antibodies from 26 providers"/>
</dbReference>
<dbReference type="DNASU" id="4706"/>
<dbReference type="Ensembl" id="ENST00000007516.8">
    <property type="protein sequence ID" value="ENSP00000007516.2"/>
    <property type="gene ID" value="ENSG00000004779.10"/>
</dbReference>
<dbReference type="Ensembl" id="ENST00000570319.5">
    <property type="protein sequence ID" value="ENSP00000458770.1"/>
    <property type="gene ID" value="ENSG00000004779.10"/>
</dbReference>
<dbReference type="GeneID" id="4706"/>
<dbReference type="KEGG" id="hsa:4706"/>
<dbReference type="MANE-Select" id="ENST00000007516.8">
    <property type="protein sequence ID" value="ENSP00000007516.2"/>
    <property type="RefSeq nucleotide sequence ID" value="NM_005003.3"/>
    <property type="RefSeq protein sequence ID" value="NP_004994.1"/>
</dbReference>
<dbReference type="UCSC" id="uc002dlw.4">
    <property type="organism name" value="human"/>
</dbReference>
<dbReference type="AGR" id="HGNC:7694"/>
<dbReference type="CTD" id="4706"/>
<dbReference type="DisGeNET" id="4706"/>
<dbReference type="GeneCards" id="NDUFAB1"/>
<dbReference type="HGNC" id="HGNC:7694">
    <property type="gene designation" value="NDUFAB1"/>
</dbReference>
<dbReference type="HPA" id="ENSG00000004779">
    <property type="expression patterns" value="Tissue enhanced (heart)"/>
</dbReference>
<dbReference type="MalaCards" id="NDUFAB1"/>
<dbReference type="MIM" id="603836">
    <property type="type" value="gene"/>
</dbReference>
<dbReference type="neXtProt" id="NX_O14561"/>
<dbReference type="OpenTargets" id="ENSG00000004779"/>
<dbReference type="PharmGKB" id="PA31500"/>
<dbReference type="VEuPathDB" id="HostDB:ENSG00000004779"/>
<dbReference type="eggNOG" id="KOG1748">
    <property type="taxonomic scope" value="Eukaryota"/>
</dbReference>
<dbReference type="GeneTree" id="ENSGT00390000002127"/>
<dbReference type="HOGENOM" id="CLU_108696_0_1_1"/>
<dbReference type="InParanoid" id="O14561"/>
<dbReference type="OMA" id="QYCEAPP"/>
<dbReference type="OrthoDB" id="448946at2759"/>
<dbReference type="PAN-GO" id="O14561">
    <property type="GO annotations" value="4 GO annotations based on evolutionary models"/>
</dbReference>
<dbReference type="PhylomeDB" id="O14561"/>
<dbReference type="TreeFam" id="TF314361"/>
<dbReference type="BioCyc" id="MetaCyc:ENSG00000004779-MONOMER"/>
<dbReference type="PathwayCommons" id="O14561"/>
<dbReference type="Reactome" id="R-HSA-611105">
    <property type="pathway name" value="Respiratory electron transport"/>
</dbReference>
<dbReference type="Reactome" id="R-HSA-6799198">
    <property type="pathway name" value="Complex I biogenesis"/>
</dbReference>
<dbReference type="Reactome" id="R-HSA-77289">
    <property type="pathway name" value="Mitochondrial Fatty Acid Beta-Oxidation"/>
</dbReference>
<dbReference type="Reactome" id="R-HSA-9857492">
    <property type="pathway name" value="Protein lipoylation"/>
</dbReference>
<dbReference type="SignaLink" id="O14561"/>
<dbReference type="SIGNOR" id="O14561"/>
<dbReference type="BioGRID-ORCS" id="4706">
    <property type="hits" value="614 hits in 1179 CRISPR screens"/>
</dbReference>
<dbReference type="ChiTaRS" id="NDUFAB1">
    <property type="organism name" value="human"/>
</dbReference>
<dbReference type="EvolutionaryTrace" id="O14561"/>
<dbReference type="GenomeRNAi" id="4706"/>
<dbReference type="Pharos" id="O14561">
    <property type="development level" value="Tclin"/>
</dbReference>
<dbReference type="PRO" id="PR:O14561"/>
<dbReference type="Proteomes" id="UP000005640">
    <property type="component" value="Chromosome 16"/>
</dbReference>
<dbReference type="RNAct" id="O14561">
    <property type="molecule type" value="protein"/>
</dbReference>
<dbReference type="Bgee" id="ENSG00000004779">
    <property type="expression patterns" value="Expressed in heart right ventricle and 211 other cell types or tissues"/>
</dbReference>
<dbReference type="ExpressionAtlas" id="O14561">
    <property type="expression patterns" value="baseline and differential"/>
</dbReference>
<dbReference type="GO" id="GO:1990229">
    <property type="term" value="C:iron-sulfur cluster assembly complex"/>
    <property type="evidence" value="ECO:0000303"/>
    <property type="project" value="ComplexPortal"/>
</dbReference>
<dbReference type="GO" id="GO:0099128">
    <property type="term" value="C:mitochondrial [2Fe-2S] assembly complex"/>
    <property type="evidence" value="ECO:0000314"/>
    <property type="project" value="FlyBase"/>
</dbReference>
<dbReference type="GO" id="GO:0005743">
    <property type="term" value="C:mitochondrial inner membrane"/>
    <property type="evidence" value="ECO:0000314"/>
    <property type="project" value="ComplexPortal"/>
</dbReference>
<dbReference type="GO" id="GO:0005759">
    <property type="term" value="C:mitochondrial matrix"/>
    <property type="evidence" value="ECO:0000250"/>
    <property type="project" value="UniProtKB"/>
</dbReference>
<dbReference type="GO" id="GO:0031966">
    <property type="term" value="C:mitochondrial membrane"/>
    <property type="evidence" value="ECO:0000250"/>
    <property type="project" value="UniProtKB"/>
</dbReference>
<dbReference type="GO" id="GO:0005739">
    <property type="term" value="C:mitochondrion"/>
    <property type="evidence" value="ECO:0000314"/>
    <property type="project" value="HPA"/>
</dbReference>
<dbReference type="GO" id="GO:0005654">
    <property type="term" value="C:nucleoplasm"/>
    <property type="evidence" value="ECO:0000314"/>
    <property type="project" value="HPA"/>
</dbReference>
<dbReference type="GO" id="GO:0045271">
    <property type="term" value="C:respiratory chain complex I"/>
    <property type="evidence" value="ECO:0000314"/>
    <property type="project" value="UniProtKB"/>
</dbReference>
<dbReference type="GO" id="GO:0000035">
    <property type="term" value="F:acyl binding"/>
    <property type="evidence" value="ECO:0000318"/>
    <property type="project" value="GO_Central"/>
</dbReference>
<dbReference type="GO" id="GO:0000036">
    <property type="term" value="F:acyl carrier activity"/>
    <property type="evidence" value="ECO:0000318"/>
    <property type="project" value="GO_Central"/>
</dbReference>
<dbReference type="GO" id="GO:0005509">
    <property type="term" value="F:calcium ion binding"/>
    <property type="evidence" value="ECO:0000303"/>
    <property type="project" value="UniProtKB"/>
</dbReference>
<dbReference type="GO" id="GO:0005504">
    <property type="term" value="F:fatty acid binding"/>
    <property type="evidence" value="ECO:0000250"/>
    <property type="project" value="UniProtKB"/>
</dbReference>
<dbReference type="GO" id="GO:0140978">
    <property type="term" value="F:mitochondrial large ribosomal subunit binding"/>
    <property type="evidence" value="ECO:0000314"/>
    <property type="project" value="UniProtKB"/>
</dbReference>
<dbReference type="GO" id="GO:0005198">
    <property type="term" value="F:structural molecule activity"/>
    <property type="evidence" value="ECO:0000314"/>
    <property type="project" value="FlyBase"/>
</dbReference>
<dbReference type="GO" id="GO:0044571">
    <property type="term" value="P:[2Fe-2S] cluster assembly"/>
    <property type="evidence" value="ECO:0000314"/>
    <property type="project" value="UniProtKB"/>
</dbReference>
<dbReference type="GO" id="GO:0009060">
    <property type="term" value="P:aerobic respiration"/>
    <property type="evidence" value="ECO:0000303"/>
    <property type="project" value="ComplexPortal"/>
</dbReference>
<dbReference type="GO" id="GO:0006633">
    <property type="term" value="P:fatty acid biosynthetic process"/>
    <property type="evidence" value="ECO:0000303"/>
    <property type="project" value="UniProtKB"/>
</dbReference>
<dbReference type="GO" id="GO:0016226">
    <property type="term" value="P:iron-sulfur cluster assembly"/>
    <property type="evidence" value="ECO:0000303"/>
    <property type="project" value="ComplexPortal"/>
</dbReference>
<dbReference type="GO" id="GO:0006120">
    <property type="term" value="P:mitochondrial electron transport, NADH to ubiquinone"/>
    <property type="evidence" value="ECO:0000303"/>
    <property type="project" value="UniProtKB"/>
</dbReference>
<dbReference type="GO" id="GO:0009249">
    <property type="term" value="P:protein lipoylation"/>
    <property type="evidence" value="ECO:0000315"/>
    <property type="project" value="UniProtKB"/>
</dbReference>
<dbReference type="GO" id="GO:0042776">
    <property type="term" value="P:proton motive force-driven mitochondrial ATP synthesis"/>
    <property type="evidence" value="ECO:0000303"/>
    <property type="project" value="ComplexPortal"/>
</dbReference>
<dbReference type="FunFam" id="1.10.1200.10:FF:000008">
    <property type="entry name" value="Acyl carrier protein"/>
    <property type="match status" value="1"/>
</dbReference>
<dbReference type="Gene3D" id="1.10.1200.10">
    <property type="entry name" value="ACP-like"/>
    <property type="match status" value="1"/>
</dbReference>
<dbReference type="HAMAP" id="MF_01217">
    <property type="entry name" value="Acyl_carrier"/>
    <property type="match status" value="1"/>
</dbReference>
<dbReference type="InterPro" id="IPR003231">
    <property type="entry name" value="ACP"/>
</dbReference>
<dbReference type="InterPro" id="IPR036736">
    <property type="entry name" value="ACP-like_sf"/>
</dbReference>
<dbReference type="InterPro" id="IPR009081">
    <property type="entry name" value="PP-bd_ACP"/>
</dbReference>
<dbReference type="InterPro" id="IPR006162">
    <property type="entry name" value="Ppantetheine_attach_site"/>
</dbReference>
<dbReference type="NCBIfam" id="TIGR00517">
    <property type="entry name" value="acyl_carrier"/>
    <property type="match status" value="1"/>
</dbReference>
<dbReference type="NCBIfam" id="NF002148">
    <property type="entry name" value="PRK00982.1-2"/>
    <property type="match status" value="1"/>
</dbReference>
<dbReference type="PANTHER" id="PTHR20863">
    <property type="entry name" value="ACYL CARRIER PROTEIN"/>
    <property type="match status" value="1"/>
</dbReference>
<dbReference type="PANTHER" id="PTHR20863:SF28">
    <property type="entry name" value="ACYL CARRIER PROTEIN, MITOCHONDRIAL"/>
    <property type="match status" value="1"/>
</dbReference>
<dbReference type="Pfam" id="PF00550">
    <property type="entry name" value="PP-binding"/>
    <property type="match status" value="1"/>
</dbReference>
<dbReference type="SUPFAM" id="SSF47336">
    <property type="entry name" value="ACP-like"/>
    <property type="match status" value="1"/>
</dbReference>
<dbReference type="PROSITE" id="PS50075">
    <property type="entry name" value="CARRIER"/>
    <property type="match status" value="1"/>
</dbReference>
<dbReference type="PROSITE" id="PS00012">
    <property type="entry name" value="PHOSPHOPANTETHEINE"/>
    <property type="match status" value="1"/>
</dbReference>
<keyword id="KW-0002">3D-structure</keyword>
<keyword id="KW-0007">Acetylation</keyword>
<keyword id="KW-0903">Direct protein sequencing</keyword>
<keyword id="KW-0249">Electron transport</keyword>
<keyword id="KW-0275">Fatty acid biosynthesis</keyword>
<keyword id="KW-0276">Fatty acid metabolism</keyword>
<keyword id="KW-0444">Lipid biosynthesis</keyword>
<keyword id="KW-0443">Lipid metabolism</keyword>
<keyword id="KW-0496">Mitochondrion</keyword>
<keyword id="KW-0596">Phosphopantetheine</keyword>
<keyword id="KW-0597">Phosphoprotein</keyword>
<keyword id="KW-1267">Proteomics identification</keyword>
<keyword id="KW-1185">Reference proteome</keyword>
<keyword id="KW-0679">Respiratory chain</keyword>
<keyword id="KW-0809">Transit peptide</keyword>
<keyword id="KW-0813">Transport</keyword>
<gene>
    <name evidence="16" type="primary">NDUFAB1</name>
</gene>
<evidence type="ECO:0000250" key="1">
    <source>
        <dbReference type="UniProtKB" id="P52505"/>
    </source>
</evidence>
<evidence type="ECO:0000250" key="2">
    <source>
        <dbReference type="UniProtKB" id="Q9CR21"/>
    </source>
</evidence>
<evidence type="ECO:0000250" key="3">
    <source>
        <dbReference type="UniProtKB" id="Q9H1K1"/>
    </source>
</evidence>
<evidence type="ECO:0000255" key="4">
    <source>
        <dbReference type="PROSITE-ProRule" id="PRU00258"/>
    </source>
</evidence>
<evidence type="ECO:0000269" key="5">
    <source>
    </source>
</evidence>
<evidence type="ECO:0000269" key="6">
    <source>
    </source>
</evidence>
<evidence type="ECO:0000269" key="7">
    <source>
    </source>
</evidence>
<evidence type="ECO:0000269" key="8">
    <source>
    </source>
</evidence>
<evidence type="ECO:0000269" key="9">
    <source>
    </source>
</evidence>
<evidence type="ECO:0000269" key="10">
    <source>
    </source>
</evidence>
<evidence type="ECO:0000269" key="11">
    <source>
    </source>
</evidence>
<evidence type="ECO:0000269" key="12">
    <source>
    </source>
</evidence>
<evidence type="ECO:0000269" key="13">
    <source>
    </source>
</evidence>
<evidence type="ECO:0000305" key="14"/>
<evidence type="ECO:0000305" key="15">
    <source>
    </source>
</evidence>
<evidence type="ECO:0000312" key="16">
    <source>
        <dbReference type="HGNC" id="HGNC:7694"/>
    </source>
</evidence>
<evidence type="ECO:0007744" key="17">
    <source>
        <dbReference type="PDB" id="5OOL"/>
    </source>
</evidence>
<evidence type="ECO:0007744" key="18">
    <source>
        <dbReference type="PDB" id="5OOM"/>
    </source>
</evidence>
<evidence type="ECO:0007744" key="19">
    <source>
        <dbReference type="PDB" id="6ODD"/>
    </source>
</evidence>
<evidence type="ECO:0007744" key="20">
    <source>
        <dbReference type="PDB" id="7QH6"/>
    </source>
</evidence>
<evidence type="ECO:0007744" key="21">
    <source>
        <dbReference type="PDB" id="7QH7"/>
    </source>
</evidence>
<evidence type="ECO:0007744" key="22">
    <source>
    </source>
</evidence>
<evidence type="ECO:0007829" key="23">
    <source>
        <dbReference type="PDB" id="6ODD"/>
    </source>
</evidence>
<evidence type="ECO:0007829" key="24">
    <source>
        <dbReference type="PDB" id="7OF0"/>
    </source>
</evidence>
<evidence type="ECO:0007829" key="25">
    <source>
        <dbReference type="PDB" id="7QH7"/>
    </source>
</evidence>
<evidence type="ECO:0007829" key="26">
    <source>
        <dbReference type="PDB" id="8QU5"/>
    </source>
</evidence>
<reference key="1">
    <citation type="journal article" date="1998" name="Biochem. Biophys. Res. Commun.">
        <title>cDNA of eight nuclear encoded subunits of NADH:ubiquinone oxidoreductase: human complex I cDNA characterization completed.</title>
        <authorList>
            <person name="Loeffen J.L.C.M."/>
            <person name="Triepels R.H."/>
            <person name="van den Heuvel L.P."/>
            <person name="Schuelke M."/>
            <person name="Buskens C.A.F."/>
            <person name="Smeets R.J.P."/>
            <person name="Trijbels J.M.F."/>
            <person name="Smeitink J.A.M."/>
        </authorList>
    </citation>
    <scope>NUCLEOTIDE SEQUENCE [MRNA]</scope>
</reference>
<reference key="2">
    <citation type="journal article" date="2004" name="Nat. Genet.">
        <title>Complete sequencing and characterization of 21,243 full-length human cDNAs.</title>
        <authorList>
            <person name="Ota T."/>
            <person name="Suzuki Y."/>
            <person name="Nishikawa T."/>
            <person name="Otsuki T."/>
            <person name="Sugiyama T."/>
            <person name="Irie R."/>
            <person name="Wakamatsu A."/>
            <person name="Hayashi K."/>
            <person name="Sato H."/>
            <person name="Nagai K."/>
            <person name="Kimura K."/>
            <person name="Makita H."/>
            <person name="Sekine M."/>
            <person name="Obayashi M."/>
            <person name="Nishi T."/>
            <person name="Shibahara T."/>
            <person name="Tanaka T."/>
            <person name="Ishii S."/>
            <person name="Yamamoto J."/>
            <person name="Saito K."/>
            <person name="Kawai Y."/>
            <person name="Isono Y."/>
            <person name="Nakamura Y."/>
            <person name="Nagahari K."/>
            <person name="Murakami K."/>
            <person name="Yasuda T."/>
            <person name="Iwayanagi T."/>
            <person name="Wagatsuma M."/>
            <person name="Shiratori A."/>
            <person name="Sudo H."/>
            <person name="Hosoiri T."/>
            <person name="Kaku Y."/>
            <person name="Kodaira H."/>
            <person name="Kondo H."/>
            <person name="Sugawara M."/>
            <person name="Takahashi M."/>
            <person name="Kanda K."/>
            <person name="Yokoi T."/>
            <person name="Furuya T."/>
            <person name="Kikkawa E."/>
            <person name="Omura Y."/>
            <person name="Abe K."/>
            <person name="Kamihara K."/>
            <person name="Katsuta N."/>
            <person name="Sato K."/>
            <person name="Tanikawa M."/>
            <person name="Yamazaki M."/>
            <person name="Ninomiya K."/>
            <person name="Ishibashi T."/>
            <person name="Yamashita H."/>
            <person name="Murakawa K."/>
            <person name="Fujimori K."/>
            <person name="Tanai H."/>
            <person name="Kimata M."/>
            <person name="Watanabe M."/>
            <person name="Hiraoka S."/>
            <person name="Chiba Y."/>
            <person name="Ishida S."/>
            <person name="Ono Y."/>
            <person name="Takiguchi S."/>
            <person name="Watanabe S."/>
            <person name="Yosida M."/>
            <person name="Hotuta T."/>
            <person name="Kusano J."/>
            <person name="Kanehori K."/>
            <person name="Takahashi-Fujii A."/>
            <person name="Hara H."/>
            <person name="Tanase T.-O."/>
            <person name="Nomura Y."/>
            <person name="Togiya S."/>
            <person name="Komai F."/>
            <person name="Hara R."/>
            <person name="Takeuchi K."/>
            <person name="Arita M."/>
            <person name="Imose N."/>
            <person name="Musashino K."/>
            <person name="Yuuki H."/>
            <person name="Oshima A."/>
            <person name="Sasaki N."/>
            <person name="Aotsuka S."/>
            <person name="Yoshikawa Y."/>
            <person name="Matsunawa H."/>
            <person name="Ichihara T."/>
            <person name="Shiohata N."/>
            <person name="Sano S."/>
            <person name="Moriya S."/>
            <person name="Momiyama H."/>
            <person name="Satoh N."/>
            <person name="Takami S."/>
            <person name="Terashima Y."/>
            <person name="Suzuki O."/>
            <person name="Nakagawa S."/>
            <person name="Senoh A."/>
            <person name="Mizoguchi H."/>
            <person name="Goto Y."/>
            <person name="Shimizu F."/>
            <person name="Wakebe H."/>
            <person name="Hishigaki H."/>
            <person name="Watanabe T."/>
            <person name="Sugiyama A."/>
            <person name="Takemoto M."/>
            <person name="Kawakami B."/>
            <person name="Yamazaki M."/>
            <person name="Watanabe K."/>
            <person name="Kumagai A."/>
            <person name="Itakura S."/>
            <person name="Fukuzumi Y."/>
            <person name="Fujimori Y."/>
            <person name="Komiyama M."/>
            <person name="Tashiro H."/>
            <person name="Tanigami A."/>
            <person name="Fujiwara T."/>
            <person name="Ono T."/>
            <person name="Yamada K."/>
            <person name="Fujii Y."/>
            <person name="Ozaki K."/>
            <person name="Hirao M."/>
            <person name="Ohmori Y."/>
            <person name="Kawabata A."/>
            <person name="Hikiji T."/>
            <person name="Kobatake N."/>
            <person name="Inagaki H."/>
            <person name="Ikema Y."/>
            <person name="Okamoto S."/>
            <person name="Okitani R."/>
            <person name="Kawakami T."/>
            <person name="Noguchi S."/>
            <person name="Itoh T."/>
            <person name="Shigeta K."/>
            <person name="Senba T."/>
            <person name="Matsumura K."/>
            <person name="Nakajima Y."/>
            <person name="Mizuno T."/>
            <person name="Morinaga M."/>
            <person name="Sasaki M."/>
            <person name="Togashi T."/>
            <person name="Oyama M."/>
            <person name="Hata H."/>
            <person name="Watanabe M."/>
            <person name="Komatsu T."/>
            <person name="Mizushima-Sugano J."/>
            <person name="Satoh T."/>
            <person name="Shirai Y."/>
            <person name="Takahashi Y."/>
            <person name="Nakagawa K."/>
            <person name="Okumura K."/>
            <person name="Nagase T."/>
            <person name="Nomura N."/>
            <person name="Kikuchi H."/>
            <person name="Masuho Y."/>
            <person name="Yamashita R."/>
            <person name="Nakai K."/>
            <person name="Yada T."/>
            <person name="Nakamura Y."/>
            <person name="Ohara O."/>
            <person name="Isogai T."/>
            <person name="Sugano S."/>
        </authorList>
    </citation>
    <scope>NUCLEOTIDE SEQUENCE [LARGE SCALE MRNA]</scope>
</reference>
<reference key="3">
    <citation type="journal article" date="1999" name="Genomics">
        <title>Genome duplications and other features in 12 Mb of DNA sequence from human chromosome 16p and 16q.</title>
        <authorList>
            <person name="Loftus B.J."/>
            <person name="Kim U.-J."/>
            <person name="Sneddon V.P."/>
            <person name="Kalush F."/>
            <person name="Brandon R."/>
            <person name="Fuhrmann J."/>
            <person name="Mason T."/>
            <person name="Crosby M.L."/>
            <person name="Barnstead M."/>
            <person name="Cronin L."/>
            <person name="Mays A.D."/>
            <person name="Cao Y."/>
            <person name="Xu R.X."/>
            <person name="Kang H.-L."/>
            <person name="Mitchell S."/>
            <person name="Eichler E.E."/>
            <person name="Harris P.C."/>
            <person name="Venter J.C."/>
            <person name="Adams M.D."/>
        </authorList>
    </citation>
    <scope>NUCLEOTIDE SEQUENCE [LARGE SCALE GENOMIC DNA]</scope>
</reference>
<reference key="4">
    <citation type="submission" date="2005-09" db="EMBL/GenBank/DDBJ databases">
        <authorList>
            <person name="Mural R.J."/>
            <person name="Istrail S."/>
            <person name="Sutton G.G."/>
            <person name="Florea L."/>
            <person name="Halpern A.L."/>
            <person name="Mobarry C.M."/>
            <person name="Lippert R."/>
            <person name="Walenz B."/>
            <person name="Shatkay H."/>
            <person name="Dew I."/>
            <person name="Miller J.R."/>
            <person name="Flanigan M.J."/>
            <person name="Edwards N.J."/>
            <person name="Bolanos R."/>
            <person name="Fasulo D."/>
            <person name="Halldorsson B.V."/>
            <person name="Hannenhalli S."/>
            <person name="Turner R."/>
            <person name="Yooseph S."/>
            <person name="Lu F."/>
            <person name="Nusskern D.R."/>
            <person name="Shue B.C."/>
            <person name="Zheng X.H."/>
            <person name="Zhong F."/>
            <person name="Delcher A.L."/>
            <person name="Huson D.H."/>
            <person name="Kravitz S.A."/>
            <person name="Mouchard L."/>
            <person name="Reinert K."/>
            <person name="Remington K.A."/>
            <person name="Clark A.G."/>
            <person name="Waterman M.S."/>
            <person name="Eichler E.E."/>
            <person name="Adams M.D."/>
            <person name="Hunkapiller M.W."/>
            <person name="Myers E.W."/>
            <person name="Venter J.C."/>
        </authorList>
    </citation>
    <scope>NUCLEOTIDE SEQUENCE [LARGE SCALE GENOMIC DNA]</scope>
</reference>
<reference key="5">
    <citation type="journal article" date="2004" name="Genome Res.">
        <title>The status, quality, and expansion of the NIH full-length cDNA project: the Mammalian Gene Collection (MGC).</title>
        <authorList>
            <consortium name="The MGC Project Team"/>
        </authorList>
    </citation>
    <scope>NUCLEOTIDE SEQUENCE [LARGE SCALE MRNA]</scope>
    <source>
        <tissue>Skin</tissue>
    </source>
</reference>
<reference key="6">
    <citation type="journal article" date="2009" name="Proc. Natl. Acad. Sci. U.S.A.">
        <title>Global profiling of protease cleavage sites by chemoselective labeling of protein N-termini.</title>
        <authorList>
            <person name="Xu G."/>
            <person name="Shin S.B."/>
            <person name="Jaffrey S.R."/>
        </authorList>
    </citation>
    <scope>PROTEIN SEQUENCE [LARGE SCALE ANALYSIS] OF 69-83</scope>
    <source>
        <tissue>Leukemic T-cell</tissue>
    </source>
</reference>
<reference key="7">
    <citation type="journal article" date="2003" name="J. Biol. Chem.">
        <title>The subunit composition of the human NADH dehydrogenase obtained by rapid one-step immunopurification.</title>
        <authorList>
            <person name="Murray J."/>
            <person name="Zhang B."/>
            <person name="Taylor S.W."/>
            <person name="Oglesbee D."/>
            <person name="Fahy E."/>
            <person name="Marusich M.F."/>
            <person name="Ghosh S.S."/>
            <person name="Capaldi R.A."/>
        </authorList>
    </citation>
    <scope>IDENTIFICATION IN THE NADH-UBIQUINONE OXIDOREDUCTASE COMPLEX</scope>
    <scope>SUBCELLULAR LOCATION</scope>
    <scope>IDENTIFICATION BY MASS SPECTROMETRY</scope>
</reference>
<reference key="8">
    <citation type="journal article" date="2011" name="BMC Syst. Biol.">
        <title>Initial characterization of the human central proteome.</title>
        <authorList>
            <person name="Burkard T.R."/>
            <person name="Planyavsky M."/>
            <person name="Kaupe I."/>
            <person name="Breitwieser F.P."/>
            <person name="Buerckstuemmer T."/>
            <person name="Bennett K.L."/>
            <person name="Superti-Furga G."/>
            <person name="Colinge J."/>
        </authorList>
    </citation>
    <scope>IDENTIFICATION BY MASS SPECTROMETRY [LARGE SCALE ANALYSIS]</scope>
</reference>
<reference key="9">
    <citation type="journal article" date="2013" name="Antioxid. Redox Signal.">
        <title>The radical-binding lipocalin A1M binds to a Complex I subunit and protects mitochondrial structure and function.</title>
        <authorList>
            <person name="Olsson M.G."/>
            <person name="Rosenloef L.W."/>
            <person name="Kotarsky H."/>
            <person name="Olofsson T."/>
            <person name="Leanderson T."/>
            <person name="Moergelin M."/>
            <person name="Fellman V."/>
            <person name="Aakerstroem B."/>
        </authorList>
    </citation>
    <scope>INTERACTION WITH ALPHA-1-MICROGLOBULIN</scope>
</reference>
<reference key="10">
    <citation type="journal article" date="2014" name="J. Proteomics">
        <title>An enzyme assisted RP-RPLC approach for in-depth analysis of human liver phosphoproteome.</title>
        <authorList>
            <person name="Bian Y."/>
            <person name="Song C."/>
            <person name="Cheng K."/>
            <person name="Dong M."/>
            <person name="Wang F."/>
            <person name="Huang J."/>
            <person name="Sun D."/>
            <person name="Wang L."/>
            <person name="Ye M."/>
            <person name="Zou H."/>
        </authorList>
    </citation>
    <scope>IDENTIFICATION BY MASS SPECTROMETRY [LARGE SCALE ANALYSIS]</scope>
    <source>
        <tissue>Liver</tissue>
    </source>
</reference>
<reference key="11">
    <citation type="journal article" date="2015" name="Proteomics">
        <title>N-terminome analysis of the human mitochondrial proteome.</title>
        <authorList>
            <person name="Vaca Jacome A.S."/>
            <person name="Rabilloud T."/>
            <person name="Schaeffer-Reiss C."/>
            <person name="Rompais M."/>
            <person name="Ayoub D."/>
            <person name="Lane L."/>
            <person name="Bairoch A."/>
            <person name="Van Dorsselaer A."/>
            <person name="Carapito C."/>
        </authorList>
    </citation>
    <scope>CLEAVAGE OF TRANSIT PEPTIDE [LARGE SCALE ANALYSIS] AFTER TYR-68</scope>
    <scope>IDENTIFICATION BY MASS SPECTROMETRY [LARGE SCALE ANALYSIS]</scope>
</reference>
<reference key="12">
    <citation type="journal article" date="2016" name="Mol. Cell">
        <title>Mitochondrial protein interaction mapping identifies regulators of respiratory chain function.</title>
        <authorList>
            <person name="Floyd B.J."/>
            <person name="Wilkerson E.M."/>
            <person name="Veling M.T."/>
            <person name="Minogue C.E."/>
            <person name="Xia C."/>
            <person name="Beebe E.T."/>
            <person name="Wrobel R.L."/>
            <person name="Cho H."/>
            <person name="Kremer L.S."/>
            <person name="Alston C.L."/>
            <person name="Gromek K.A."/>
            <person name="Dolan B.K."/>
            <person name="Ulbrich A."/>
            <person name="Stefely J.A."/>
            <person name="Bohl S.L."/>
            <person name="Werner K.M."/>
            <person name="Jochem A."/>
            <person name="Westphall M.S."/>
            <person name="Rensvold J.W."/>
            <person name="Taylor R.W."/>
            <person name="Prokisch H."/>
            <person name="Kim J.J."/>
            <person name="Coon J.J."/>
            <person name="Pagliarini D.J."/>
        </authorList>
    </citation>
    <scope>INTERACTION WITH ETFRF1</scope>
</reference>
<reference key="13">
    <citation type="journal article" date="2016" name="Nature">
        <title>Accessory subunits are integral for assembly and function of human mitochondrial complex I.</title>
        <authorList>
            <person name="Stroud D.A."/>
            <person name="Surgenor E.E."/>
            <person name="Formosa L.E."/>
            <person name="Reljic B."/>
            <person name="Frazier A.E."/>
            <person name="Dibley M.G."/>
            <person name="Osellame L.D."/>
            <person name="Stait T."/>
            <person name="Beilharz T.H."/>
            <person name="Thorburn D.R."/>
            <person name="Salim A."/>
            <person name="Ryan M.T."/>
        </authorList>
    </citation>
    <scope>FUNCTION</scope>
    <scope>IDENTIFICATION IN THE NADH-UBIQUINONE OXIDOREDUCTASE COMPLEX</scope>
</reference>
<reference key="14">
    <citation type="journal article" date="2018" name="Biochemistry">
        <title>MIEF1 microprotein regulates mitochondrial translation.</title>
        <authorList>
            <person name="Rathore A."/>
            <person name="Chu Q."/>
            <person name="Tan D."/>
            <person name="Martinez T.F."/>
            <person name="Donaldson C.J."/>
            <person name="Diedrich J.K."/>
            <person name="Yates J.R. III"/>
            <person name="Saghatelian A."/>
        </authorList>
    </citation>
    <scope>INTERACTION WITH MIEF1 UPSTREAM OPEN READING FRAME PROTEIN</scope>
</reference>
<reference key="15">
    <citation type="submission" date="2006-10" db="PDB data bank">
        <title>Solution structure of RSGI RUH-059, an ACP domain of acyl carrier protein, mitochondrial from human.</title>
        <authorList>
            <consortium name="RIKEN structural genomics initiative (RSGI)"/>
        </authorList>
    </citation>
    <scope>STRUCTURE BY NMR OF 69-156</scope>
</reference>
<reference evidence="17 18" key="16">
    <citation type="journal article" date="2017" name="Nat. Struct. Mol. Biol.">
        <title>Structures of the human mitochondrial ribosome in native states of assembly.</title>
        <authorList>
            <person name="Brown A."/>
            <person name="Rathore S."/>
            <person name="Kimanius D."/>
            <person name="Aibara S."/>
            <person name="Bai X.C."/>
            <person name="Rorbach J."/>
            <person name="Amunts A."/>
            <person name="Ramakrishnan V."/>
        </authorList>
    </citation>
    <scope>STRUCTURE BY ELECTRON MICROSCOPY (3.03 ANGSTROMS)</scope>
    <scope>IDENTIFICATION BY MASS SPECTROMETRY</scope>
    <scope>SUBCELLULAR LOCATION</scope>
    <scope>SUBUNIT</scope>
</reference>
<reference evidence="19" key="17">
    <citation type="journal article" date="2019" name="Biochemistry">
        <title>Structure of the Human ACP-ISD11 Heterodimer.</title>
        <authorList>
            <person name="Herrera M.G."/>
            <person name="Noguera M.E."/>
            <person name="Sewell K.E."/>
            <person name="Agudelo Suarez W.A."/>
            <person name="Capece L."/>
            <person name="Klinke S."/>
            <person name="Santos J."/>
        </authorList>
    </citation>
    <scope>X-RAY CRYSTALLOGRAPHY (2.00 ANGSTROMS) OF 72-156 IN COMPLEX WITH LYRM4</scope>
    <scope>SUBUNIT</scope>
    <scope>IDENTIFICATION BY MASS SPECTROMETRY</scope>
    <scope>FUNCTION</scope>
    <scope>COMPONENT OF THE CYSTEINE DESULFURASE COMPLEX</scope>
    <scope>PHOSPHOPANTETHEINYLATION AT SER-112</scope>
</reference>
<reference evidence="20 21" key="18">
    <citation type="journal article" date="2022" name="Nat. Commun.">
        <title>A late-stage assembly checkpoint of the human mitochondrial ribosome large subunit.</title>
        <authorList>
            <person name="Rebelo-Guiomar P."/>
            <person name="Pellegrino S."/>
            <person name="Dent K.C."/>
            <person name="Sas-Chen A."/>
            <person name="Miller-Fleming L."/>
            <person name="Garone C."/>
            <person name="Van Haute L."/>
            <person name="Rogan J.F."/>
            <person name="Dinan A."/>
            <person name="Firth A.E."/>
            <person name="Andrews B."/>
            <person name="Whitworth A.J."/>
            <person name="Schwartz S."/>
            <person name="Warren A.J."/>
            <person name="Minczuk M."/>
        </authorList>
    </citation>
    <scope>STRUCTURE BY ELECTRON MICROSCOPY (2.9 ANGSTROMS) IN COMPLEX WITH MTLSU</scope>
    <scope>SUBUNIT</scope>
</reference>
<feature type="transit peptide" description="Mitochondrion" evidence="6 22">
    <location>
        <begin position="1"/>
        <end position="68"/>
    </location>
</feature>
<feature type="chain" id="PRO_0000000561" description="Acyl carrier protein, mitochondrial">
    <location>
        <begin position="69"/>
        <end position="156"/>
    </location>
</feature>
<feature type="domain" description="Carrier" evidence="4">
    <location>
        <begin position="77"/>
        <end position="152"/>
    </location>
</feature>
<feature type="modified residue" description="N6-acetyllysine" evidence="2">
    <location>
        <position position="88"/>
    </location>
</feature>
<feature type="modified residue" description="O-(pantetheine 4'-phosphoryl)serine" evidence="4 12 19">
    <location>
        <position position="112"/>
    </location>
</feature>
<feature type="sequence conflict" description="In Ref. 5; AAH58920." evidence="14" ref="5">
    <original>D</original>
    <variation>Y</variation>
    <location>
        <position position="132"/>
    </location>
</feature>
<feature type="helix" evidence="23">
    <location>
        <begin position="76"/>
        <end position="88"/>
    </location>
</feature>
<feature type="strand" evidence="24">
    <location>
        <begin position="91"/>
        <end position="93"/>
    </location>
</feature>
<feature type="helix" evidence="23">
    <location>
        <begin position="95"/>
        <end position="97"/>
    </location>
</feature>
<feature type="strand" evidence="26">
    <location>
        <begin position="99"/>
        <end position="101"/>
    </location>
</feature>
<feature type="turn" evidence="23">
    <location>
        <begin position="104"/>
        <end position="108"/>
    </location>
</feature>
<feature type="helix" evidence="23">
    <location>
        <begin position="112"/>
        <end position="126"/>
    </location>
</feature>
<feature type="helix" evidence="23">
    <location>
        <begin position="132"/>
        <end position="135"/>
    </location>
</feature>
<feature type="turn" evidence="25">
    <location>
        <begin position="136"/>
        <end position="138"/>
    </location>
</feature>
<feature type="helix" evidence="23">
    <location>
        <begin position="141"/>
        <end position="151"/>
    </location>
</feature>
<sequence>MASRVLSAYVSRLPAAFAPLPRVRMLAVARPLSTALCSAGTQTRLGTLQPALVLAQVPGRVTQLCRQYSDMPPLTLEGIQDRVLYVLKLYDKIDPEKLSVNSHFMKDLGLDSLDQVEIIMAMEDEFGFEIPDIDAEKLMCPQEIVDYIADKKDVYE</sequence>
<name>ACPM_HUMAN</name>
<organism>
    <name type="scientific">Homo sapiens</name>
    <name type="common">Human</name>
    <dbReference type="NCBI Taxonomy" id="9606"/>
    <lineage>
        <taxon>Eukaryota</taxon>
        <taxon>Metazoa</taxon>
        <taxon>Chordata</taxon>
        <taxon>Craniata</taxon>
        <taxon>Vertebrata</taxon>
        <taxon>Euteleostomi</taxon>
        <taxon>Mammalia</taxon>
        <taxon>Eutheria</taxon>
        <taxon>Euarchontoglires</taxon>
        <taxon>Primates</taxon>
        <taxon>Haplorrhini</taxon>
        <taxon>Catarrhini</taxon>
        <taxon>Hominidae</taxon>
        <taxon>Homo</taxon>
    </lineage>
</organism>